<sequence>MACVASSTTLISSPSSRVFPAKSSLSSPSVSFLRTLSSPSASASLRSGFARRSSLSSTSRRSFAVKAQADDLPLVGNKAPDFEAEAVFDQEFIKVKLSDYIGKKYVILFFYPLDFTFVCPTEITAFSDRHSEFEKLNTEVLGVSVDSVFSHLAWVQTDRKSGGLGDLNYPLISDVTKSISKSFGVLIHDQGIALRGLFIIDKEGVIQHSTINNLGIGRSVDETMRTLQALQYTGNPDEVCPAGWKPGEKSMKPDPKLSKEYFSAI</sequence>
<keyword id="KW-0049">Antioxidant</keyword>
<keyword id="KW-0150">Chloroplast</keyword>
<keyword id="KW-1015">Disulfide bond</keyword>
<keyword id="KW-0560">Oxidoreductase</keyword>
<keyword id="KW-0575">Peroxidase</keyword>
<keyword id="KW-0934">Plastid</keyword>
<keyword id="KW-0676">Redox-active center</keyword>
<keyword id="KW-1185">Reference proteome</keyword>
<keyword id="KW-0809">Transit peptide</keyword>
<protein>
    <recommendedName>
        <fullName>2-Cys peroxiredoxin BAS1, chloroplastic</fullName>
        <ecNumber evidence="3">1.11.1.24</ecNumber>
    </recommendedName>
    <alternativeName>
        <fullName>Thiol-specific antioxidant protein</fullName>
    </alternativeName>
    <alternativeName>
        <fullName evidence="5">Thioredoxin-dependent peroxiredoxin BAS1</fullName>
    </alternativeName>
</protein>
<dbReference type="EC" id="1.11.1.24" evidence="3"/>
<dbReference type="EMBL" id="X94219">
    <property type="protein sequence ID" value="CAA63910.1"/>
    <property type="molecule type" value="mRNA"/>
</dbReference>
<dbReference type="PIR" id="T09211">
    <property type="entry name" value="T09211"/>
</dbReference>
<dbReference type="SMR" id="O24364"/>
<dbReference type="IntAct" id="O24364">
    <property type="interactions" value="1"/>
</dbReference>
<dbReference type="PeroxiBase" id="4408">
    <property type="entry name" value="So2CysPrx"/>
</dbReference>
<dbReference type="Proteomes" id="UP001155700">
    <property type="component" value="Unplaced"/>
</dbReference>
<dbReference type="GO" id="GO:0009507">
    <property type="term" value="C:chloroplast"/>
    <property type="evidence" value="ECO:0007669"/>
    <property type="project" value="UniProtKB-SubCell"/>
</dbReference>
<dbReference type="GO" id="GO:0008379">
    <property type="term" value="F:thioredoxin peroxidase activity"/>
    <property type="evidence" value="ECO:0000318"/>
    <property type="project" value="GO_Central"/>
</dbReference>
<dbReference type="GO" id="GO:0045454">
    <property type="term" value="P:cell redox homeostasis"/>
    <property type="evidence" value="ECO:0000318"/>
    <property type="project" value="GO_Central"/>
</dbReference>
<dbReference type="GO" id="GO:0033554">
    <property type="term" value="P:cellular response to stress"/>
    <property type="evidence" value="ECO:0007669"/>
    <property type="project" value="TreeGrafter"/>
</dbReference>
<dbReference type="GO" id="GO:0042744">
    <property type="term" value="P:hydrogen peroxide catabolic process"/>
    <property type="evidence" value="ECO:0000318"/>
    <property type="project" value="GO_Central"/>
</dbReference>
<dbReference type="GO" id="GO:0006979">
    <property type="term" value="P:response to oxidative stress"/>
    <property type="evidence" value="ECO:0000318"/>
    <property type="project" value="GO_Central"/>
</dbReference>
<dbReference type="CDD" id="cd03015">
    <property type="entry name" value="PRX_Typ2cys"/>
    <property type="match status" value="1"/>
</dbReference>
<dbReference type="FunFam" id="3.40.30.10:FF:000063">
    <property type="entry name" value="2-Cys peroxiredoxin BAS1, chloroplastic"/>
    <property type="match status" value="1"/>
</dbReference>
<dbReference type="Gene3D" id="3.40.30.10">
    <property type="entry name" value="Glutaredoxin"/>
    <property type="match status" value="1"/>
</dbReference>
<dbReference type="InterPro" id="IPR000866">
    <property type="entry name" value="AhpC/TSA"/>
</dbReference>
<dbReference type="InterPro" id="IPR050217">
    <property type="entry name" value="Peroxiredoxin"/>
</dbReference>
<dbReference type="InterPro" id="IPR019479">
    <property type="entry name" value="Peroxiredoxin_C"/>
</dbReference>
<dbReference type="InterPro" id="IPR036249">
    <property type="entry name" value="Thioredoxin-like_sf"/>
</dbReference>
<dbReference type="InterPro" id="IPR013766">
    <property type="entry name" value="Thioredoxin_domain"/>
</dbReference>
<dbReference type="PANTHER" id="PTHR10681:SF178">
    <property type="entry name" value="2-CYS PEROXIREDOXIN BAS1, CHLOROPLASTIC"/>
    <property type="match status" value="1"/>
</dbReference>
<dbReference type="PANTHER" id="PTHR10681">
    <property type="entry name" value="THIOREDOXIN PEROXIDASE"/>
    <property type="match status" value="1"/>
</dbReference>
<dbReference type="Pfam" id="PF10417">
    <property type="entry name" value="1-cysPrx_C"/>
    <property type="match status" value="1"/>
</dbReference>
<dbReference type="Pfam" id="PF00578">
    <property type="entry name" value="AhpC-TSA"/>
    <property type="match status" value="1"/>
</dbReference>
<dbReference type="SUPFAM" id="SSF52833">
    <property type="entry name" value="Thioredoxin-like"/>
    <property type="match status" value="1"/>
</dbReference>
<dbReference type="PROSITE" id="PS51352">
    <property type="entry name" value="THIOREDOXIN_2"/>
    <property type="match status" value="1"/>
</dbReference>
<reference key="1">
    <citation type="journal article" date="1996" name="Plant Mol. Biol.">
        <title>Primary structure and expression of plant homologues of animal and fungal thioredoxin-dependent peroxide reductases and bacterial alkyl hydroperoxide reductases.</title>
        <authorList>
            <person name="Baier M."/>
            <person name="Dietz K.-J."/>
        </authorList>
    </citation>
    <scope>NUCLEOTIDE SEQUENCE [MRNA]</scope>
    <source>
        <tissue>Leaf</tissue>
    </source>
</reference>
<feature type="transit peptide" description="Chloroplast" evidence="1">
    <location>
        <begin position="1"/>
        <end position="65"/>
    </location>
</feature>
<feature type="chain" id="PRO_0000023786" description="2-Cys peroxiredoxin BAS1, chloroplastic">
    <location>
        <begin position="66"/>
        <end position="265"/>
    </location>
</feature>
<feature type="domain" description="Thioredoxin" evidence="4">
    <location>
        <begin position="73"/>
        <end position="232"/>
    </location>
</feature>
<feature type="active site" description="Cysteine sulfenic acid (-SOH) intermediate" evidence="2">
    <location>
        <position position="119"/>
    </location>
</feature>
<feature type="disulfide bond" description="Interchain (with C-240); in linked form" evidence="2">
    <location>
        <position position="119"/>
    </location>
</feature>
<feature type="disulfide bond" description="Interchain (with C-119); in linked form" evidence="2">
    <location>
        <position position="240"/>
    </location>
</feature>
<proteinExistence type="evidence at transcript level"/>
<evidence type="ECO:0000250" key="1"/>
<evidence type="ECO:0000250" key="2">
    <source>
        <dbReference type="UniProtKB" id="Q06830"/>
    </source>
</evidence>
<evidence type="ECO:0000250" key="3">
    <source>
        <dbReference type="UniProtKB" id="Q96291"/>
    </source>
</evidence>
<evidence type="ECO:0000255" key="4">
    <source>
        <dbReference type="PROSITE-ProRule" id="PRU00691"/>
    </source>
</evidence>
<evidence type="ECO:0000305" key="5"/>
<comment type="function">
    <text evidence="3">Thiol-specific peroxidase that catalyzes the reduction of hydrogen peroxide and organic hydroperoxides to water and alcohols, respectively. Plays a role in cell protection against oxidative stress by detoxifying peroxides. May be an antioxidant enzyme particularly in the developing shoot and photosynthesizing leaf.</text>
</comment>
<comment type="catalytic activity">
    <reaction evidence="3">
        <text>a hydroperoxide + [thioredoxin]-dithiol = an alcohol + [thioredoxin]-disulfide + H2O</text>
        <dbReference type="Rhea" id="RHEA:62620"/>
        <dbReference type="Rhea" id="RHEA-COMP:10698"/>
        <dbReference type="Rhea" id="RHEA-COMP:10700"/>
        <dbReference type="ChEBI" id="CHEBI:15377"/>
        <dbReference type="ChEBI" id="CHEBI:29950"/>
        <dbReference type="ChEBI" id="CHEBI:30879"/>
        <dbReference type="ChEBI" id="CHEBI:35924"/>
        <dbReference type="ChEBI" id="CHEBI:50058"/>
        <dbReference type="EC" id="1.11.1.24"/>
    </reaction>
</comment>
<comment type="subunit">
    <text evidence="2">Homodimer; disulfide-linked, upon oxidation.</text>
</comment>
<comment type="subcellular location">
    <subcellularLocation>
        <location evidence="3">Plastid</location>
        <location evidence="3">Chloroplast</location>
    </subcellularLocation>
</comment>
<comment type="miscellaneous">
    <text evidence="3">The active site is a conserved redox-active cysteine residue, the peroxidatic cysteine (C(P)), which makes the nucleophilic attack on the peroxide substrate. The peroxide oxidizes the C(P)-SH to cysteine sulfenic acid (C(P)-SOH), which then reacts with another cysteine residue, the resolving cysteine (C(R)), to form a disulfide bridge. The disulfide is subsequently reduced by an appropriate electron donor to complete the catalytic cycle. In this typical 2-Cys peroxiredoxin, C(R) is provided by the other dimeric subunit to form an intersubunit disulfide. The disulfide is subsequently reduced by thioredoxin.</text>
</comment>
<comment type="similarity">
    <text evidence="5">Belongs to the peroxiredoxin family. AhpC/Prx1 subfamily.</text>
</comment>
<accession>O24364</accession>
<organism>
    <name type="scientific">Spinacia oleracea</name>
    <name type="common">Spinach</name>
    <dbReference type="NCBI Taxonomy" id="3562"/>
    <lineage>
        <taxon>Eukaryota</taxon>
        <taxon>Viridiplantae</taxon>
        <taxon>Streptophyta</taxon>
        <taxon>Embryophyta</taxon>
        <taxon>Tracheophyta</taxon>
        <taxon>Spermatophyta</taxon>
        <taxon>Magnoliopsida</taxon>
        <taxon>eudicotyledons</taxon>
        <taxon>Gunneridae</taxon>
        <taxon>Pentapetalae</taxon>
        <taxon>Caryophyllales</taxon>
        <taxon>Chenopodiaceae</taxon>
        <taxon>Chenopodioideae</taxon>
        <taxon>Anserineae</taxon>
        <taxon>Spinacia</taxon>
    </lineage>
</organism>
<name>BAS1_SPIOL</name>
<gene>
    <name type="primary">BAS1</name>
</gene>